<name>BI1_BOVIN</name>
<protein>
    <recommendedName>
        <fullName>Bax inhibitor 1</fullName>
        <shortName>BI-1</shortName>
    </recommendedName>
    <alternativeName>
        <fullName>Testis-enhanced gene transcript protein</fullName>
    </alternativeName>
    <alternativeName>
        <fullName>Transmembrane BAX inhibitor motif-containing protein 6</fullName>
    </alternativeName>
</protein>
<sequence>MNIFDRKINFDALFKFSHITPSTQQHLKKVYASFALCMFVAAAGAYIHVVTHFIQAGLLSALGSLGLMIWLMATPHSHETEQKRLGLLAGFAFLTGVGLGPALDLCIAINPSILPTAFMGTAMIFTCFTLSALYARRRSYLFLGGILMSAMSLMLLSSLGNLFFGSVWLFQANLYMGLVVMCGFVLFDTQLIIEKAENGDKDYIWHCVDLFLDFVTLFRKLMMILAMNEKDKKKKK</sequence>
<evidence type="ECO:0000250" key="1">
    <source>
        <dbReference type="UniProtKB" id="P55061"/>
    </source>
</evidence>
<evidence type="ECO:0000250" key="2">
    <source>
        <dbReference type="UniProtKB" id="Q9D2C7"/>
    </source>
</evidence>
<evidence type="ECO:0000255" key="3"/>
<evidence type="ECO:0000305" key="4"/>
<feature type="chain" id="PRO_0000327214" description="Bax inhibitor 1">
    <location>
        <begin position="1"/>
        <end position="236"/>
    </location>
</feature>
<feature type="topological domain" description="Cytoplasmic" evidence="3">
    <location>
        <begin position="1"/>
        <end position="29"/>
    </location>
</feature>
<feature type="transmembrane region" description="Helical" evidence="3">
    <location>
        <begin position="30"/>
        <end position="50"/>
    </location>
</feature>
<feature type="topological domain" description="Lumenal" evidence="3">
    <location>
        <begin position="51"/>
        <end position="52"/>
    </location>
</feature>
<feature type="transmembrane region" description="Helical" evidence="3">
    <location>
        <begin position="53"/>
        <end position="73"/>
    </location>
</feature>
<feature type="topological domain" description="Cytoplasmic" evidence="3">
    <location>
        <begin position="74"/>
        <end position="86"/>
    </location>
</feature>
<feature type="transmembrane region" description="Helical" evidence="3">
    <location>
        <begin position="87"/>
        <end position="107"/>
    </location>
</feature>
<feature type="topological domain" description="Lumenal" evidence="3">
    <location>
        <begin position="108"/>
        <end position="112"/>
    </location>
</feature>
<feature type="transmembrane region" description="Helical" evidence="3">
    <location>
        <begin position="113"/>
        <end position="133"/>
    </location>
</feature>
<feature type="topological domain" description="Cytoplasmic" evidence="3">
    <location>
        <begin position="134"/>
        <end position="139"/>
    </location>
</feature>
<feature type="transmembrane region" description="Helical" evidence="3">
    <location>
        <begin position="140"/>
        <end position="160"/>
    </location>
</feature>
<feature type="topological domain" description="Lumenal" evidence="3">
    <location>
        <begin position="161"/>
        <end position="166"/>
    </location>
</feature>
<feature type="transmembrane region" description="Helical" evidence="3">
    <location>
        <begin position="167"/>
        <end position="187"/>
    </location>
</feature>
<feature type="topological domain" description="Cytoplasmic" evidence="3">
    <location>
        <begin position="188"/>
        <end position="206"/>
    </location>
</feature>
<feature type="intramembrane region" description="Helical" evidence="3">
    <location>
        <begin position="207"/>
        <end position="227"/>
    </location>
</feature>
<feature type="topological domain" description="Cytoplasmic" evidence="3">
    <location>
        <begin position="228"/>
        <end position="236"/>
    </location>
</feature>
<feature type="cross-link" description="Glycyl lysine isopeptide (Lys-Gly) (interchain with G-Cter in ubiquitin)" evidence="1">
    <location>
        <position position="7"/>
    </location>
</feature>
<dbReference type="EMBL" id="BT026337">
    <property type="protein sequence ID" value="ABG81493.1"/>
    <property type="molecule type" value="mRNA"/>
</dbReference>
<dbReference type="EMBL" id="BC149995">
    <property type="protein sequence ID" value="AAI49996.1"/>
    <property type="molecule type" value="mRNA"/>
</dbReference>
<dbReference type="RefSeq" id="NP_001069882.1">
    <property type="nucleotide sequence ID" value="NM_001076414.1"/>
</dbReference>
<dbReference type="RefSeq" id="XP_024847975.1">
    <property type="nucleotide sequence ID" value="XM_024992207.2"/>
</dbReference>
<dbReference type="SMR" id="Q0V882"/>
<dbReference type="FunCoup" id="Q0V882">
    <property type="interactions" value="1868"/>
</dbReference>
<dbReference type="STRING" id="9913.ENSBTAP00000043666"/>
<dbReference type="PaxDb" id="9913-ENSBTAP00000043666"/>
<dbReference type="GeneID" id="616210"/>
<dbReference type="KEGG" id="bta:616210"/>
<dbReference type="CTD" id="7009"/>
<dbReference type="VEuPathDB" id="HostDB:ENSBTAG00000018588"/>
<dbReference type="eggNOG" id="KOG1629">
    <property type="taxonomic scope" value="Eukaryota"/>
</dbReference>
<dbReference type="HOGENOM" id="CLU_061277_0_1_1"/>
<dbReference type="InParanoid" id="Q0V882"/>
<dbReference type="OMA" id="SRDFIMH"/>
<dbReference type="OrthoDB" id="1277691at2759"/>
<dbReference type="TreeFam" id="TF323395"/>
<dbReference type="Proteomes" id="UP000009136">
    <property type="component" value="Chromosome 5"/>
</dbReference>
<dbReference type="Bgee" id="ENSBTAG00000018588">
    <property type="expression patterns" value="Expressed in thyroid gland and 104 other cell types or tissues"/>
</dbReference>
<dbReference type="GO" id="GO:0005789">
    <property type="term" value="C:endoplasmic reticulum membrane"/>
    <property type="evidence" value="ECO:0000318"/>
    <property type="project" value="GO_Central"/>
</dbReference>
<dbReference type="GO" id="GO:0005262">
    <property type="term" value="F:calcium channel activity"/>
    <property type="evidence" value="ECO:0000318"/>
    <property type="project" value="GO_Central"/>
</dbReference>
<dbReference type="GO" id="GO:0060698">
    <property type="term" value="F:endoribonuclease inhibitor activity"/>
    <property type="evidence" value="ECO:0000318"/>
    <property type="project" value="GO_Central"/>
</dbReference>
<dbReference type="GO" id="GO:0006915">
    <property type="term" value="P:apoptotic process"/>
    <property type="evidence" value="ECO:0007669"/>
    <property type="project" value="UniProtKB-KW"/>
</dbReference>
<dbReference type="GO" id="GO:0006914">
    <property type="term" value="P:autophagy"/>
    <property type="evidence" value="ECO:0007669"/>
    <property type="project" value="UniProtKB-KW"/>
</dbReference>
<dbReference type="GO" id="GO:0034620">
    <property type="term" value="P:cellular response to unfolded protein"/>
    <property type="evidence" value="ECO:0000318"/>
    <property type="project" value="GO_Central"/>
</dbReference>
<dbReference type="GO" id="GO:2001234">
    <property type="term" value="P:negative regulation of apoptotic signaling pathway"/>
    <property type="evidence" value="ECO:0000318"/>
    <property type="project" value="GO_Central"/>
</dbReference>
<dbReference type="CDD" id="cd10430">
    <property type="entry name" value="BI-1"/>
    <property type="match status" value="1"/>
</dbReference>
<dbReference type="InterPro" id="IPR006213">
    <property type="entry name" value="Bax_inhbtr1_CS"/>
</dbReference>
<dbReference type="InterPro" id="IPR006214">
    <property type="entry name" value="Bax_inhibitor_1-related"/>
</dbReference>
<dbReference type="PANTHER" id="PTHR23291:SF32">
    <property type="entry name" value="BAX INHIBITOR 1"/>
    <property type="match status" value="1"/>
</dbReference>
<dbReference type="PANTHER" id="PTHR23291">
    <property type="entry name" value="BAX INHIBITOR-RELATED"/>
    <property type="match status" value="1"/>
</dbReference>
<dbReference type="Pfam" id="PF01027">
    <property type="entry name" value="Bax1-I"/>
    <property type="match status" value="1"/>
</dbReference>
<dbReference type="PROSITE" id="PS01243">
    <property type="entry name" value="BI1"/>
    <property type="match status" value="1"/>
</dbReference>
<gene>
    <name type="primary">TMBIM6</name>
    <name type="synonym">TEGT</name>
</gene>
<reference key="1">
    <citation type="journal article" date="2005" name="BMC Genomics">
        <title>Characterization of 954 bovine full-CDS cDNA sequences.</title>
        <authorList>
            <person name="Harhay G.P."/>
            <person name="Sonstegard T.S."/>
            <person name="Keele J.W."/>
            <person name="Heaton M.P."/>
            <person name="Clawson M.L."/>
            <person name="Snelling W.M."/>
            <person name="Wiedmann R.T."/>
            <person name="Van Tassell C.P."/>
            <person name="Smith T.P.L."/>
        </authorList>
    </citation>
    <scope>NUCLEOTIDE SEQUENCE [LARGE SCALE MRNA]</scope>
</reference>
<reference key="2">
    <citation type="submission" date="2007-07" db="EMBL/GenBank/DDBJ databases">
        <authorList>
            <consortium name="NIH - Mammalian Gene Collection (MGC) project"/>
        </authorList>
    </citation>
    <scope>NUCLEOTIDE SEQUENCE [LARGE SCALE MRNA]</scope>
    <source>
        <strain>Hereford</strain>
        <tissue>Hypothalamus</tissue>
    </source>
</reference>
<comment type="function">
    <text evidence="1 2">Endoplasmic reticulum (ER)-resident protein that confers cellular protection as an anti-apoptotic protein by limiting multiple stress-inducing pathways surrounding the endoplasmic reticulum and mitochondria. Inhibits the activities of the key sensor for the endoplasmic reticulum unfolded protein response IRE1alpha/ERN1 both directly and by blocking BAX/BAK binding. Modulates ER calcium homeostasis by acting as a calcium-leak channel (By similarity). Negatively regulates autophagy and autophagosome formation, especially during periods of nutrient deprivation, and reduces cell survival during starvation (By similarity).</text>
</comment>
<comment type="subunit">
    <text evidence="1">Interacts with BCL2 and BCL2L1. Interacts with ERN1.</text>
</comment>
<comment type="subcellular location">
    <subcellularLocation>
        <location evidence="1">Endoplasmic reticulum membrane</location>
        <topology evidence="1">Multi-pass membrane protein</topology>
    </subcellularLocation>
</comment>
<comment type="domain">
    <text evidence="1">The intra-membrane loop at the C-terminus acts as a calcium pore, mediating calcium leak from the ER into the cytosol.</text>
</comment>
<comment type="PTM">
    <text evidence="1">Ubiquitinated by BFAR, leading to proteasomal degradation.</text>
</comment>
<comment type="similarity">
    <text evidence="4">Belongs to the BI1 family.</text>
</comment>
<accession>Q0V882</accession>
<proteinExistence type="evidence at transcript level"/>
<keyword id="KW-0053">Apoptosis</keyword>
<keyword id="KW-0072">Autophagy</keyword>
<keyword id="KW-0106">Calcium</keyword>
<keyword id="KW-0256">Endoplasmic reticulum</keyword>
<keyword id="KW-1017">Isopeptide bond</keyword>
<keyword id="KW-0472">Membrane</keyword>
<keyword id="KW-1185">Reference proteome</keyword>
<keyword id="KW-0812">Transmembrane</keyword>
<keyword id="KW-1133">Transmembrane helix</keyword>
<keyword id="KW-0832">Ubl conjugation</keyword>
<keyword id="KW-0834">Unfolded protein response</keyword>
<organism>
    <name type="scientific">Bos taurus</name>
    <name type="common">Bovine</name>
    <dbReference type="NCBI Taxonomy" id="9913"/>
    <lineage>
        <taxon>Eukaryota</taxon>
        <taxon>Metazoa</taxon>
        <taxon>Chordata</taxon>
        <taxon>Craniata</taxon>
        <taxon>Vertebrata</taxon>
        <taxon>Euteleostomi</taxon>
        <taxon>Mammalia</taxon>
        <taxon>Eutheria</taxon>
        <taxon>Laurasiatheria</taxon>
        <taxon>Artiodactyla</taxon>
        <taxon>Ruminantia</taxon>
        <taxon>Pecora</taxon>
        <taxon>Bovidae</taxon>
        <taxon>Bovinae</taxon>
        <taxon>Bos</taxon>
    </lineage>
</organism>